<feature type="signal peptide" evidence="1">
    <location>
        <begin position="1"/>
        <end position="24"/>
    </location>
</feature>
<feature type="chain" id="PRO_0000034664" description="Tol-Pal system protein TolB" evidence="1">
    <location>
        <begin position="25"/>
        <end position="431"/>
    </location>
</feature>
<feature type="region of interest" description="Disordered" evidence="2">
    <location>
        <begin position="318"/>
        <end position="340"/>
    </location>
</feature>
<feature type="compositionally biased region" description="Low complexity" evidence="2">
    <location>
        <begin position="323"/>
        <end position="332"/>
    </location>
</feature>
<accession>Q65UN0</accession>
<sequence length="431" mass="45147">MMKFLTRMLSAFAVLFFAISTAQADDEVRIVIDEGVDGARPIAVVPFKTNGSVPADIAEIVTADLRNSGKFNPIPVSQMPQQPASASEVTPDAWAALGVDAIVVGQVTATGNGYNIAYQLVDTVGASGGAGAVLAQNSVTVGAKWIRYGAHTVSDEVFEKLTAIKGAFRTRIAYVVQKNGGSKPYEIRVADYDGFNQFIVNRSSQPIMSPAWSPDGKRLAYVSFENRKSQLVVQDLGSGARKVVASFQGHNGAPAFSPDGSRLAFASNKEGQLNIYVMGANGGQPTQLTSGSGNNTEPSWSPDGSSILFTSDRGGSPQVYRMSSSGGAASPVGGRGSAQISSDGKTLVMINGNNNVVKQDVTSGASEVLSTSFLGESPSLSPNGIMIIYSSTQGLGKVLQLVSADGRFKARLPGTDGQVKFPAWSPYLDKN</sequence>
<dbReference type="EMBL" id="AE016827">
    <property type="protein sequence ID" value="AAU37330.1"/>
    <property type="molecule type" value="Genomic_DNA"/>
</dbReference>
<dbReference type="SMR" id="Q65UN0"/>
<dbReference type="STRING" id="221988.MS0723"/>
<dbReference type="KEGG" id="msu:MS0723"/>
<dbReference type="eggNOG" id="COG0823">
    <property type="taxonomic scope" value="Bacteria"/>
</dbReference>
<dbReference type="HOGENOM" id="CLU_047123_0_0_6"/>
<dbReference type="Proteomes" id="UP000000607">
    <property type="component" value="Chromosome"/>
</dbReference>
<dbReference type="GO" id="GO:0042597">
    <property type="term" value="C:periplasmic space"/>
    <property type="evidence" value="ECO:0007669"/>
    <property type="project" value="UniProtKB-SubCell"/>
</dbReference>
<dbReference type="GO" id="GO:0051301">
    <property type="term" value="P:cell division"/>
    <property type="evidence" value="ECO:0007669"/>
    <property type="project" value="UniProtKB-UniRule"/>
</dbReference>
<dbReference type="GO" id="GO:0017038">
    <property type="term" value="P:protein import"/>
    <property type="evidence" value="ECO:0007669"/>
    <property type="project" value="InterPro"/>
</dbReference>
<dbReference type="Gene3D" id="2.120.10.30">
    <property type="entry name" value="TolB, C-terminal domain"/>
    <property type="match status" value="1"/>
</dbReference>
<dbReference type="Gene3D" id="3.40.50.10070">
    <property type="entry name" value="TolB, N-terminal domain"/>
    <property type="match status" value="1"/>
</dbReference>
<dbReference type="HAMAP" id="MF_00671">
    <property type="entry name" value="TolB"/>
    <property type="match status" value="1"/>
</dbReference>
<dbReference type="InterPro" id="IPR011042">
    <property type="entry name" value="6-blade_b-propeller_TolB-like"/>
</dbReference>
<dbReference type="InterPro" id="IPR011659">
    <property type="entry name" value="PD40"/>
</dbReference>
<dbReference type="InterPro" id="IPR014167">
    <property type="entry name" value="Tol-Pal_TolB"/>
</dbReference>
<dbReference type="InterPro" id="IPR007195">
    <property type="entry name" value="TolB_N"/>
</dbReference>
<dbReference type="NCBIfam" id="TIGR02800">
    <property type="entry name" value="propeller_TolB"/>
    <property type="match status" value="1"/>
</dbReference>
<dbReference type="PANTHER" id="PTHR36842:SF1">
    <property type="entry name" value="PROTEIN TOLB"/>
    <property type="match status" value="1"/>
</dbReference>
<dbReference type="PANTHER" id="PTHR36842">
    <property type="entry name" value="PROTEIN TOLB HOMOLOG"/>
    <property type="match status" value="1"/>
</dbReference>
<dbReference type="Pfam" id="PF07676">
    <property type="entry name" value="PD40"/>
    <property type="match status" value="4"/>
</dbReference>
<dbReference type="Pfam" id="PF04052">
    <property type="entry name" value="TolB_N"/>
    <property type="match status" value="1"/>
</dbReference>
<dbReference type="SUPFAM" id="SSF52964">
    <property type="entry name" value="TolB, N-terminal domain"/>
    <property type="match status" value="1"/>
</dbReference>
<dbReference type="SUPFAM" id="SSF69304">
    <property type="entry name" value="Tricorn protease N-terminal domain"/>
    <property type="match status" value="1"/>
</dbReference>
<gene>
    <name evidence="1" type="primary">tolB</name>
    <name type="ordered locus">MS0723</name>
</gene>
<keyword id="KW-0131">Cell cycle</keyword>
<keyword id="KW-0132">Cell division</keyword>
<keyword id="KW-0574">Periplasm</keyword>
<keyword id="KW-0732">Signal</keyword>
<protein>
    <recommendedName>
        <fullName evidence="1">Tol-Pal system protein TolB</fullName>
    </recommendedName>
</protein>
<proteinExistence type="inferred from homology"/>
<name>TOLB_MANSM</name>
<comment type="function">
    <text evidence="1">Part of the Tol-Pal system, which plays a role in outer membrane invagination during cell division and is important for maintaining outer membrane integrity.</text>
</comment>
<comment type="subunit">
    <text evidence="1">The Tol-Pal system is composed of five core proteins: the inner membrane proteins TolA, TolQ and TolR, the periplasmic protein TolB and the outer membrane protein Pal. They form a network linking the inner and outer membranes and the peptidoglycan layer.</text>
</comment>
<comment type="subcellular location">
    <subcellularLocation>
        <location evidence="1">Periplasm</location>
    </subcellularLocation>
</comment>
<comment type="similarity">
    <text evidence="1">Belongs to the TolB family.</text>
</comment>
<reference key="1">
    <citation type="journal article" date="2004" name="Nat. Biotechnol.">
        <title>The genome sequence of the capnophilic rumen bacterium Mannheimia succiniciproducens.</title>
        <authorList>
            <person name="Hong S.H."/>
            <person name="Kim J.S."/>
            <person name="Lee S.Y."/>
            <person name="In Y.H."/>
            <person name="Choi S.S."/>
            <person name="Rih J.-K."/>
            <person name="Kim C.H."/>
            <person name="Jeong H."/>
            <person name="Hur C.G."/>
            <person name="Kim J.J."/>
        </authorList>
    </citation>
    <scope>NUCLEOTIDE SEQUENCE [LARGE SCALE GENOMIC DNA]</scope>
    <source>
        <strain>KCTC 0769BP / MBEL55E</strain>
    </source>
</reference>
<evidence type="ECO:0000255" key="1">
    <source>
        <dbReference type="HAMAP-Rule" id="MF_00671"/>
    </source>
</evidence>
<evidence type="ECO:0000256" key="2">
    <source>
        <dbReference type="SAM" id="MobiDB-lite"/>
    </source>
</evidence>
<organism>
    <name type="scientific">Mannheimia succiniciproducens (strain KCTC 0769BP / MBEL55E)</name>
    <dbReference type="NCBI Taxonomy" id="221988"/>
    <lineage>
        <taxon>Bacteria</taxon>
        <taxon>Pseudomonadati</taxon>
        <taxon>Pseudomonadota</taxon>
        <taxon>Gammaproteobacteria</taxon>
        <taxon>Pasteurellales</taxon>
        <taxon>Pasteurellaceae</taxon>
        <taxon>Basfia</taxon>
    </lineage>
</organism>